<reference key="1">
    <citation type="journal article" date="1997" name="Microbiology">
        <title>Sequence and analysis of a 31 kb segment of the Bacillus subtilis chromosome in the area of the rrnH and rrnG operons.</title>
        <authorList>
            <person name="Liu H."/>
            <person name="Haga K."/>
            <person name="Yasumoto K."/>
            <person name="Ohashi Y."/>
            <person name="Yoshikawa H."/>
            <person name="Takahashi H."/>
        </authorList>
    </citation>
    <scope>NUCLEOTIDE SEQUENCE [GENOMIC DNA]</scope>
    <source>
        <strain>168</strain>
    </source>
</reference>
<reference key="2">
    <citation type="journal article" date="1997" name="Nature">
        <title>The complete genome sequence of the Gram-positive bacterium Bacillus subtilis.</title>
        <authorList>
            <person name="Kunst F."/>
            <person name="Ogasawara N."/>
            <person name="Moszer I."/>
            <person name="Albertini A.M."/>
            <person name="Alloni G."/>
            <person name="Azevedo V."/>
            <person name="Bertero M.G."/>
            <person name="Bessieres P."/>
            <person name="Bolotin A."/>
            <person name="Borchert S."/>
            <person name="Borriss R."/>
            <person name="Boursier L."/>
            <person name="Brans A."/>
            <person name="Braun M."/>
            <person name="Brignell S.C."/>
            <person name="Bron S."/>
            <person name="Brouillet S."/>
            <person name="Bruschi C.V."/>
            <person name="Caldwell B."/>
            <person name="Capuano V."/>
            <person name="Carter N.M."/>
            <person name="Choi S.-K."/>
            <person name="Codani J.-J."/>
            <person name="Connerton I.F."/>
            <person name="Cummings N.J."/>
            <person name="Daniel R.A."/>
            <person name="Denizot F."/>
            <person name="Devine K.M."/>
            <person name="Duesterhoeft A."/>
            <person name="Ehrlich S.D."/>
            <person name="Emmerson P.T."/>
            <person name="Entian K.-D."/>
            <person name="Errington J."/>
            <person name="Fabret C."/>
            <person name="Ferrari E."/>
            <person name="Foulger D."/>
            <person name="Fritz C."/>
            <person name="Fujita M."/>
            <person name="Fujita Y."/>
            <person name="Fuma S."/>
            <person name="Galizzi A."/>
            <person name="Galleron N."/>
            <person name="Ghim S.-Y."/>
            <person name="Glaser P."/>
            <person name="Goffeau A."/>
            <person name="Golightly E.J."/>
            <person name="Grandi G."/>
            <person name="Guiseppi G."/>
            <person name="Guy B.J."/>
            <person name="Haga K."/>
            <person name="Haiech J."/>
            <person name="Harwood C.R."/>
            <person name="Henaut A."/>
            <person name="Hilbert H."/>
            <person name="Holsappel S."/>
            <person name="Hosono S."/>
            <person name="Hullo M.-F."/>
            <person name="Itaya M."/>
            <person name="Jones L.-M."/>
            <person name="Joris B."/>
            <person name="Karamata D."/>
            <person name="Kasahara Y."/>
            <person name="Klaerr-Blanchard M."/>
            <person name="Klein C."/>
            <person name="Kobayashi Y."/>
            <person name="Koetter P."/>
            <person name="Koningstein G."/>
            <person name="Krogh S."/>
            <person name="Kumano M."/>
            <person name="Kurita K."/>
            <person name="Lapidus A."/>
            <person name="Lardinois S."/>
            <person name="Lauber J."/>
            <person name="Lazarevic V."/>
            <person name="Lee S.-M."/>
            <person name="Levine A."/>
            <person name="Liu H."/>
            <person name="Masuda S."/>
            <person name="Mauel C."/>
            <person name="Medigue C."/>
            <person name="Medina N."/>
            <person name="Mellado R.P."/>
            <person name="Mizuno M."/>
            <person name="Moestl D."/>
            <person name="Nakai S."/>
            <person name="Noback M."/>
            <person name="Noone D."/>
            <person name="O'Reilly M."/>
            <person name="Ogawa K."/>
            <person name="Ogiwara A."/>
            <person name="Oudega B."/>
            <person name="Park S.-H."/>
            <person name="Parro V."/>
            <person name="Pohl T.M."/>
            <person name="Portetelle D."/>
            <person name="Porwollik S."/>
            <person name="Prescott A.M."/>
            <person name="Presecan E."/>
            <person name="Pujic P."/>
            <person name="Purnelle B."/>
            <person name="Rapoport G."/>
            <person name="Rey M."/>
            <person name="Reynolds S."/>
            <person name="Rieger M."/>
            <person name="Rivolta C."/>
            <person name="Rocha E."/>
            <person name="Roche B."/>
            <person name="Rose M."/>
            <person name="Sadaie Y."/>
            <person name="Sato T."/>
            <person name="Scanlan E."/>
            <person name="Schleich S."/>
            <person name="Schroeter R."/>
            <person name="Scoffone F."/>
            <person name="Sekiguchi J."/>
            <person name="Sekowska A."/>
            <person name="Seror S.J."/>
            <person name="Serror P."/>
            <person name="Shin B.-S."/>
            <person name="Soldo B."/>
            <person name="Sorokin A."/>
            <person name="Tacconi E."/>
            <person name="Takagi T."/>
            <person name="Takahashi H."/>
            <person name="Takemaru K."/>
            <person name="Takeuchi M."/>
            <person name="Tamakoshi A."/>
            <person name="Tanaka T."/>
            <person name="Terpstra P."/>
            <person name="Tognoni A."/>
            <person name="Tosato V."/>
            <person name="Uchiyama S."/>
            <person name="Vandenbol M."/>
            <person name="Vannier F."/>
            <person name="Vassarotti A."/>
            <person name="Viari A."/>
            <person name="Wambutt R."/>
            <person name="Wedler E."/>
            <person name="Wedler H."/>
            <person name="Weitzenegger T."/>
            <person name="Winters P."/>
            <person name="Wipat A."/>
            <person name="Yamamoto H."/>
            <person name="Yamane K."/>
            <person name="Yasumoto K."/>
            <person name="Yata K."/>
            <person name="Yoshida K."/>
            <person name="Yoshikawa H.-F."/>
            <person name="Zumstein E."/>
            <person name="Yoshikawa H."/>
            <person name="Danchin A."/>
        </authorList>
    </citation>
    <scope>NUCLEOTIDE SEQUENCE [LARGE SCALE GENOMIC DNA]</scope>
    <source>
        <strain>168</strain>
    </source>
</reference>
<reference key="3">
    <citation type="journal article" date="2007" name="Mol. Cell. Proteomics">
        <title>The serine/threonine/tyrosine phosphoproteome of the model bacterium Bacillus subtilis.</title>
        <authorList>
            <person name="Macek B."/>
            <person name="Mijakovic I."/>
            <person name="Olsen J.V."/>
            <person name="Gnad F."/>
            <person name="Kumar C."/>
            <person name="Jensen P.R."/>
            <person name="Mann M."/>
        </authorList>
    </citation>
    <scope>PHOSPHORYLATION [LARGE SCALE ANALYSIS] AT SER-2</scope>
    <scope>CLEAVAGE OF INITIATOR METHIONINE</scope>
    <scope>IDENTIFICATION BY MASS SPECTROMETRY</scope>
    <source>
        <strain>168</strain>
    </source>
</reference>
<gene>
    <name evidence="1" type="primary">murQ</name>
    <name type="synonym">ybbI</name>
    <name type="ordered locus">BSU01700</name>
</gene>
<keyword id="KW-0119">Carbohydrate metabolism</keyword>
<keyword id="KW-0456">Lyase</keyword>
<keyword id="KW-0597">Phosphoprotein</keyword>
<keyword id="KW-1185">Reference proteome</keyword>
<name>MURQ_BACSU</name>
<sequence>MSEPLNLHRLTTESRNSQTVEIHKANTLGILKMINNEDMKVAAAVQEVLPDIKTAVDCAYESFQNGGRLIYTGAGTSGRLGVMDAVECPPTYSVSPDQVIGIMAGGPEAFLQAAEGIEDSEEAGAEDLRNIQLTSNDTVIAIAASGRTPYAAGALRYARKVGAHTIALTCNENSAISKDADHSIEVVVGPEAITGSTRMKAATAHKMILNMISTAVMVKIGKVYENLMVDVNVSNKKLKERAISIIQSLTNASYDTARYTLEQADHHVKTAIVMLKTSTDQKQAQTLLDEANGFIDKAIEHYHP</sequence>
<protein>
    <recommendedName>
        <fullName evidence="1">N-acetylmuramic acid 6-phosphate etherase</fullName>
        <shortName evidence="1">MurNAc-6-P etherase</shortName>
        <ecNumber evidence="1">4.2.1.126</ecNumber>
    </recommendedName>
    <alternativeName>
        <fullName evidence="1">N-acetylmuramic acid 6-phosphate hydrolase</fullName>
    </alternativeName>
    <alternativeName>
        <fullName evidence="1">N-acetylmuramic acid 6-phosphate lyase</fullName>
    </alternativeName>
</protein>
<evidence type="ECO:0000255" key="1">
    <source>
        <dbReference type="HAMAP-Rule" id="MF_00068"/>
    </source>
</evidence>
<evidence type="ECO:0000269" key="2">
    <source>
    </source>
</evidence>
<evidence type="ECO:0000305" key="3"/>
<proteinExistence type="evidence at protein level"/>
<comment type="function">
    <text evidence="1">Specifically catalyzes the cleavage of the D-lactyl ether substituent of MurNAc 6-phosphate, producing GlcNAc 6-phosphate and D-lactate.</text>
</comment>
<comment type="catalytic activity">
    <reaction evidence="1">
        <text>N-acetyl-D-muramate 6-phosphate + H2O = N-acetyl-D-glucosamine 6-phosphate + (R)-lactate</text>
        <dbReference type="Rhea" id="RHEA:26410"/>
        <dbReference type="ChEBI" id="CHEBI:15377"/>
        <dbReference type="ChEBI" id="CHEBI:16004"/>
        <dbReference type="ChEBI" id="CHEBI:57513"/>
        <dbReference type="ChEBI" id="CHEBI:58722"/>
        <dbReference type="EC" id="4.2.1.126"/>
    </reaction>
</comment>
<comment type="pathway">
    <text evidence="1">Amino-sugar metabolism; N-acetylmuramate degradation.</text>
</comment>
<comment type="subunit">
    <text evidence="1">Homodimer.</text>
</comment>
<comment type="miscellaneous">
    <text evidence="1">A lyase-type mechanism (elimination/hydration) is suggested for the cleavage of the lactyl ether bond of MurNAc 6-phosphate, with the formation of an alpha,beta-unsaturated aldehyde intermediate with (E)-stereochemistry, followed by the syn addition of water to give product.</text>
</comment>
<comment type="similarity">
    <text evidence="1">Belongs to the GCKR-like family. MurNAc-6-P etherase subfamily.</text>
</comment>
<comment type="sequence caution" evidence="3">
    <conflict type="erroneous initiation">
        <sequence resource="EMBL-CDS" id="BAA19504"/>
    </conflict>
</comment>
<dbReference type="EC" id="4.2.1.126" evidence="1"/>
<dbReference type="EMBL" id="AB002150">
    <property type="protein sequence ID" value="BAA19504.1"/>
    <property type="status" value="ALT_INIT"/>
    <property type="molecule type" value="Genomic_DNA"/>
</dbReference>
<dbReference type="EMBL" id="AL009126">
    <property type="protein sequence ID" value="CAB11946.1"/>
    <property type="molecule type" value="Genomic_DNA"/>
</dbReference>
<dbReference type="PIR" id="D69744">
    <property type="entry name" value="D69744"/>
</dbReference>
<dbReference type="RefSeq" id="NP_388051.1">
    <property type="nucleotide sequence ID" value="NC_000964.3"/>
</dbReference>
<dbReference type="RefSeq" id="WP_003246253.1">
    <property type="nucleotide sequence ID" value="NZ_OZ025638.1"/>
</dbReference>
<dbReference type="SMR" id="Q45582"/>
<dbReference type="FunCoup" id="Q45582">
    <property type="interactions" value="152"/>
</dbReference>
<dbReference type="STRING" id="224308.BSU01700"/>
<dbReference type="iPTMnet" id="Q45582"/>
<dbReference type="PaxDb" id="224308-BSU01700"/>
<dbReference type="EnsemblBacteria" id="CAB11946">
    <property type="protein sequence ID" value="CAB11946"/>
    <property type="gene ID" value="BSU_01700"/>
</dbReference>
<dbReference type="GeneID" id="938882"/>
<dbReference type="KEGG" id="bsu:BSU01700"/>
<dbReference type="PATRIC" id="fig|224308.179.peg.176"/>
<dbReference type="eggNOG" id="COG2103">
    <property type="taxonomic scope" value="Bacteria"/>
</dbReference>
<dbReference type="InParanoid" id="Q45582"/>
<dbReference type="OrthoDB" id="9813395at2"/>
<dbReference type="PhylomeDB" id="Q45582"/>
<dbReference type="BioCyc" id="BSUB:BSU01700-MONOMER"/>
<dbReference type="UniPathway" id="UPA00342"/>
<dbReference type="Proteomes" id="UP000001570">
    <property type="component" value="Chromosome"/>
</dbReference>
<dbReference type="GO" id="GO:0097367">
    <property type="term" value="F:carbohydrate derivative binding"/>
    <property type="evidence" value="ECO:0007669"/>
    <property type="project" value="InterPro"/>
</dbReference>
<dbReference type="GO" id="GO:0016835">
    <property type="term" value="F:carbon-oxygen lyase activity"/>
    <property type="evidence" value="ECO:0000318"/>
    <property type="project" value="GO_Central"/>
</dbReference>
<dbReference type="GO" id="GO:0016803">
    <property type="term" value="F:ether hydrolase activity"/>
    <property type="evidence" value="ECO:0000318"/>
    <property type="project" value="GO_Central"/>
</dbReference>
<dbReference type="GO" id="GO:0046348">
    <property type="term" value="P:amino sugar catabolic process"/>
    <property type="evidence" value="ECO:0000318"/>
    <property type="project" value="GO_Central"/>
</dbReference>
<dbReference type="GO" id="GO:0097173">
    <property type="term" value="P:N-acetylmuramic acid catabolic process"/>
    <property type="evidence" value="ECO:0007669"/>
    <property type="project" value="UniProtKB-UniPathway"/>
</dbReference>
<dbReference type="GO" id="GO:0009254">
    <property type="term" value="P:peptidoglycan turnover"/>
    <property type="evidence" value="ECO:0000318"/>
    <property type="project" value="GO_Central"/>
</dbReference>
<dbReference type="CDD" id="cd05007">
    <property type="entry name" value="SIS_Etherase"/>
    <property type="match status" value="1"/>
</dbReference>
<dbReference type="FunFam" id="1.10.8.1080:FF:000001">
    <property type="entry name" value="N-acetylmuramic acid 6-phosphate etherase"/>
    <property type="match status" value="1"/>
</dbReference>
<dbReference type="FunFam" id="3.40.50.10490:FF:000014">
    <property type="entry name" value="N-acetylmuramic acid 6-phosphate etherase"/>
    <property type="match status" value="1"/>
</dbReference>
<dbReference type="Gene3D" id="1.10.8.1080">
    <property type="match status" value="1"/>
</dbReference>
<dbReference type="Gene3D" id="3.40.50.10490">
    <property type="entry name" value="Glucose-6-phosphate isomerase like protein, domain 1"/>
    <property type="match status" value="1"/>
</dbReference>
<dbReference type="HAMAP" id="MF_00068">
    <property type="entry name" value="MurQ"/>
    <property type="match status" value="1"/>
</dbReference>
<dbReference type="InterPro" id="IPR005488">
    <property type="entry name" value="Etherase_MurQ"/>
</dbReference>
<dbReference type="InterPro" id="IPR005486">
    <property type="entry name" value="Glucokinase_regulatory_CS"/>
</dbReference>
<dbReference type="InterPro" id="IPR040190">
    <property type="entry name" value="MURQ/GCKR"/>
</dbReference>
<dbReference type="InterPro" id="IPR001347">
    <property type="entry name" value="SIS_dom"/>
</dbReference>
<dbReference type="InterPro" id="IPR046348">
    <property type="entry name" value="SIS_dom_sf"/>
</dbReference>
<dbReference type="NCBIfam" id="TIGR00274">
    <property type="entry name" value="N-acetylmuramic acid 6-phosphate etherase"/>
    <property type="match status" value="1"/>
</dbReference>
<dbReference type="NCBIfam" id="NF003915">
    <property type="entry name" value="PRK05441.1"/>
    <property type="match status" value="1"/>
</dbReference>
<dbReference type="NCBIfam" id="NF009222">
    <property type="entry name" value="PRK12570.1"/>
    <property type="match status" value="1"/>
</dbReference>
<dbReference type="PANTHER" id="PTHR10088">
    <property type="entry name" value="GLUCOKINASE REGULATORY PROTEIN"/>
    <property type="match status" value="1"/>
</dbReference>
<dbReference type="PANTHER" id="PTHR10088:SF4">
    <property type="entry name" value="GLUCOKINASE REGULATORY PROTEIN"/>
    <property type="match status" value="1"/>
</dbReference>
<dbReference type="Pfam" id="PF20741">
    <property type="entry name" value="GKRP-like_C"/>
    <property type="match status" value="1"/>
</dbReference>
<dbReference type="Pfam" id="PF22645">
    <property type="entry name" value="GKRP_SIS_N"/>
    <property type="match status" value="1"/>
</dbReference>
<dbReference type="SUPFAM" id="SSF53697">
    <property type="entry name" value="SIS domain"/>
    <property type="match status" value="1"/>
</dbReference>
<dbReference type="PROSITE" id="PS01272">
    <property type="entry name" value="GCKR"/>
    <property type="match status" value="1"/>
</dbReference>
<dbReference type="PROSITE" id="PS51464">
    <property type="entry name" value="SIS"/>
    <property type="match status" value="1"/>
</dbReference>
<accession>Q45582</accession>
<accession>O08071</accession>
<accession>O31420</accession>
<organism>
    <name type="scientific">Bacillus subtilis (strain 168)</name>
    <dbReference type="NCBI Taxonomy" id="224308"/>
    <lineage>
        <taxon>Bacteria</taxon>
        <taxon>Bacillati</taxon>
        <taxon>Bacillota</taxon>
        <taxon>Bacilli</taxon>
        <taxon>Bacillales</taxon>
        <taxon>Bacillaceae</taxon>
        <taxon>Bacillus</taxon>
    </lineage>
</organism>
<feature type="initiator methionine" description="Removed" evidence="2">
    <location>
        <position position="1"/>
    </location>
</feature>
<feature type="chain" id="PRO_0000214835" description="N-acetylmuramic acid 6-phosphate etherase">
    <location>
        <begin position="2"/>
        <end position="304"/>
    </location>
</feature>
<feature type="domain" description="SIS" evidence="1">
    <location>
        <begin position="59"/>
        <end position="222"/>
    </location>
</feature>
<feature type="active site" description="Proton donor" evidence="1">
    <location>
        <position position="87"/>
    </location>
</feature>
<feature type="active site" evidence="1">
    <location>
        <position position="118"/>
    </location>
</feature>
<feature type="modified residue" description="Phosphoserine" evidence="2">
    <location>
        <position position="2"/>
    </location>
</feature>
<feature type="sequence conflict" description="In Ref. 1; BAA19504." evidence="3" ref="1">
    <original>TSTDQKQAQTLLDEANGFIDKAIEHYHP</original>
    <variation>SKHRSETSTDITR</variation>
    <location>
        <begin position="277"/>
        <end position="304"/>
    </location>
</feature>